<keyword id="KW-0002">3D-structure</keyword>
<keyword id="KW-0963">Cytoplasm</keyword>
<keyword id="KW-0271">Exosome</keyword>
<keyword id="KW-0539">Nucleus</keyword>
<keyword id="KW-1185">Reference proteome</keyword>
<keyword id="KW-0694">RNA-binding</keyword>
<keyword id="KW-0698">rRNA processing</keyword>
<gene>
    <name type="primary">RRP40</name>
    <name type="ordered locus">YOL142W</name>
</gene>
<comment type="function">
    <text evidence="1 4 5">Non-catalytic component of the RNA exosome complex which has 3'-&gt;5' exoribonuclease activity and participates in a multitude of cellular RNA processing and degradation events. In the nucleus, the RNA exosome complex is involved in proper maturation of stable RNA species such as rRNA, snRNA and snoRNA, in the elimination of RNA processing by-products and non-coding 'pervasive' transcripts, such as antisense RNA species and cryptic unstable transcripts (CUTs), and of mRNAs with processing defects, thereby limiting or excluding their export to the cytoplasm. In the cytoplasm, the RNA exosome complex is involved in general mRNA turnover and in RNA surveillance pathways, preventing translation of aberrant mRNAs. The catalytic inactive RNA exosome core complex of 9 subunits (Exo-9) is proposed to play a pivotal role in the binding and presentation of RNA for ribonucleolysis, and to serve as a scaffold for the association with catalytic subunits and accessory proteins or complexes. RRP40 as peripheral part of the Exo-9 complex is thought to stabilize the hexameric ring of RNase PH-domain subunits.</text>
</comment>
<comment type="subunit">
    <text evidence="1 4">Component of the RNA exosome complex. Specifically part of the catalytically inactive RNA exosome core complex (Exo-9) which may associate with the catalytic subunits RRP6 and DIS3 in cytoplasmic- and nuclear-specific RNA exosome complex forms. Exo-9 is formed by a hexameric base ring of RNase PH domain-containing subunits and a cap ring consisting of CSL4, RRP4 and RRP40.</text>
</comment>
<comment type="interaction">
    <interactant intactId="EBI-1831">
        <id>Q08285</id>
    </interactant>
    <interactant intactId="EBI-1731">
        <id>P53859</id>
        <label>CSL4</label>
    </interactant>
    <organismsDiffer>false</organismsDiffer>
    <experiments>15</experiments>
</comment>
<comment type="interaction">
    <interactant intactId="EBI-1831">
        <id>Q08285</id>
    </interactant>
    <interactant intactId="EBI-1740">
        <id>Q08162</id>
        <label>DIS3</label>
    </interactant>
    <organismsDiffer>false</organismsDiffer>
    <experiments>4</experiments>
</comment>
<comment type="interaction">
    <interactant intactId="EBI-1831">
        <id>Q08285</id>
    </interactant>
    <interactant intactId="EBI-1788">
        <id>P46948</id>
        <label>SKI6</label>
    </interactant>
    <organismsDiffer>false</organismsDiffer>
    <experiments>5</experiments>
</comment>
<comment type="subcellular location">
    <subcellularLocation>
        <location evidence="2">Cytoplasm</location>
    </subcellularLocation>
    <subcellularLocation>
        <location evidence="2">Nucleus</location>
        <location evidence="2">Nucleolus</location>
    </subcellularLocation>
</comment>
<comment type="miscellaneous">
    <text evidence="3">Present with 6050 molecules/cell in log phase SD medium.</text>
</comment>
<comment type="similarity">
    <text evidence="6">Belongs to the RRP40 family.</text>
</comment>
<comment type="caution">
    <text evidence="6">According to PubMed:17173052 and PubMed:17174896, only DIS3/RRP44 subunit of the exosome core has exonuclease activity.</text>
</comment>
<organism>
    <name type="scientific">Saccharomyces cerevisiae (strain ATCC 204508 / S288c)</name>
    <name type="common">Baker's yeast</name>
    <dbReference type="NCBI Taxonomy" id="559292"/>
    <lineage>
        <taxon>Eukaryota</taxon>
        <taxon>Fungi</taxon>
        <taxon>Dikarya</taxon>
        <taxon>Ascomycota</taxon>
        <taxon>Saccharomycotina</taxon>
        <taxon>Saccharomycetes</taxon>
        <taxon>Saccharomycetales</taxon>
        <taxon>Saccharomycetaceae</taxon>
        <taxon>Saccharomyces</taxon>
    </lineage>
</organism>
<reference key="1">
    <citation type="journal article" date="1997" name="Nature">
        <title>The nucleotide sequence of Saccharomyces cerevisiae chromosome XV.</title>
        <authorList>
            <person name="Dujon B."/>
            <person name="Albermann K."/>
            <person name="Aldea M."/>
            <person name="Alexandraki D."/>
            <person name="Ansorge W."/>
            <person name="Arino J."/>
            <person name="Benes V."/>
            <person name="Bohn C."/>
            <person name="Bolotin-Fukuhara M."/>
            <person name="Bordonne R."/>
            <person name="Boyer J."/>
            <person name="Camasses A."/>
            <person name="Casamayor A."/>
            <person name="Casas C."/>
            <person name="Cheret G."/>
            <person name="Cziepluch C."/>
            <person name="Daignan-Fornier B."/>
            <person name="Dang V.-D."/>
            <person name="de Haan M."/>
            <person name="Delius H."/>
            <person name="Durand P."/>
            <person name="Fairhead C."/>
            <person name="Feldmann H."/>
            <person name="Gaillon L."/>
            <person name="Galisson F."/>
            <person name="Gamo F.-J."/>
            <person name="Gancedo C."/>
            <person name="Goffeau A."/>
            <person name="Goulding S.E."/>
            <person name="Grivell L.A."/>
            <person name="Habbig B."/>
            <person name="Hand N.J."/>
            <person name="Hani J."/>
            <person name="Hattenhorst U."/>
            <person name="Hebling U."/>
            <person name="Hernando Y."/>
            <person name="Herrero E."/>
            <person name="Heumann K."/>
            <person name="Hiesel R."/>
            <person name="Hilger F."/>
            <person name="Hofmann B."/>
            <person name="Hollenberg C.P."/>
            <person name="Hughes B."/>
            <person name="Jauniaux J.-C."/>
            <person name="Kalogeropoulos A."/>
            <person name="Katsoulou C."/>
            <person name="Kordes E."/>
            <person name="Lafuente M.J."/>
            <person name="Landt O."/>
            <person name="Louis E.J."/>
            <person name="Maarse A.C."/>
            <person name="Madania A."/>
            <person name="Mannhaupt G."/>
            <person name="Marck C."/>
            <person name="Martin R.P."/>
            <person name="Mewes H.-W."/>
            <person name="Michaux G."/>
            <person name="Paces V."/>
            <person name="Parle-McDermott A.G."/>
            <person name="Pearson B.M."/>
            <person name="Perrin A."/>
            <person name="Pettersson B."/>
            <person name="Poch O."/>
            <person name="Pohl T.M."/>
            <person name="Poirey R."/>
            <person name="Portetelle D."/>
            <person name="Pujol A."/>
            <person name="Purnelle B."/>
            <person name="Ramezani Rad M."/>
            <person name="Rechmann S."/>
            <person name="Schwager C."/>
            <person name="Schweizer M."/>
            <person name="Sor F."/>
            <person name="Sterky F."/>
            <person name="Tarassov I.A."/>
            <person name="Teodoru C."/>
            <person name="Tettelin H."/>
            <person name="Thierry A."/>
            <person name="Tobiasch E."/>
            <person name="Tzermia M."/>
            <person name="Uhlen M."/>
            <person name="Unseld M."/>
            <person name="Valens M."/>
            <person name="Vandenbol M."/>
            <person name="Vetter I."/>
            <person name="Vlcek C."/>
            <person name="Voet M."/>
            <person name="Volckaert G."/>
            <person name="Voss H."/>
            <person name="Wambutt R."/>
            <person name="Wedler H."/>
            <person name="Wiemann S."/>
            <person name="Winsor B."/>
            <person name="Wolfe K.H."/>
            <person name="Zollner A."/>
            <person name="Zumstein E."/>
            <person name="Kleine K."/>
        </authorList>
    </citation>
    <scope>NUCLEOTIDE SEQUENCE [LARGE SCALE GENOMIC DNA]</scope>
    <source>
        <strain>ATCC 204508 / S288c</strain>
    </source>
</reference>
<reference key="2">
    <citation type="journal article" date="2014" name="G3 (Bethesda)">
        <title>The reference genome sequence of Saccharomyces cerevisiae: Then and now.</title>
        <authorList>
            <person name="Engel S.R."/>
            <person name="Dietrich F.S."/>
            <person name="Fisk D.G."/>
            <person name="Binkley G."/>
            <person name="Balakrishnan R."/>
            <person name="Costanzo M.C."/>
            <person name="Dwight S.S."/>
            <person name="Hitz B.C."/>
            <person name="Karra K."/>
            <person name="Nash R.S."/>
            <person name="Weng S."/>
            <person name="Wong E.D."/>
            <person name="Lloyd P."/>
            <person name="Skrzypek M.S."/>
            <person name="Miyasato S.R."/>
            <person name="Simison M."/>
            <person name="Cherry J.M."/>
        </authorList>
    </citation>
    <scope>GENOME REANNOTATION</scope>
    <scope>SEQUENCE REVISION TO 160</scope>
    <source>
        <strain>ATCC 204508 / S288c</strain>
    </source>
</reference>
<reference key="3">
    <citation type="journal article" date="2007" name="Genome Res.">
        <title>Approaching a complete repository of sequence-verified protein-encoding clones for Saccharomyces cerevisiae.</title>
        <authorList>
            <person name="Hu Y."/>
            <person name="Rolfs A."/>
            <person name="Bhullar B."/>
            <person name="Murthy T.V.S."/>
            <person name="Zhu C."/>
            <person name="Berger M.F."/>
            <person name="Camargo A.A."/>
            <person name="Kelley F."/>
            <person name="McCarron S."/>
            <person name="Jepson D."/>
            <person name="Richardson A."/>
            <person name="Raphael J."/>
            <person name="Moreira D."/>
            <person name="Taycher E."/>
            <person name="Zuo D."/>
            <person name="Mohr S."/>
            <person name="Kane M.F."/>
            <person name="Williamson J."/>
            <person name="Simpson A.J.G."/>
            <person name="Bulyk M.L."/>
            <person name="Harlow E."/>
            <person name="Marsischky G."/>
            <person name="Kolodner R.D."/>
            <person name="LaBaer J."/>
        </authorList>
    </citation>
    <scope>NUCLEOTIDE SEQUENCE [GENOMIC DNA]</scope>
    <source>
        <strain>ATCC 204508 / S288c</strain>
    </source>
</reference>
<reference key="4">
    <citation type="journal article" date="1999" name="Genes Dev.">
        <title>The yeast exosome and human PM-Scl are related complexes of 3'--&gt;5' exonucleases.</title>
        <authorList>
            <person name="Allmang C."/>
            <person name="Petfalski E."/>
            <person name="Podtelejnikov A."/>
            <person name="Mann M."/>
            <person name="Tollervey D."/>
            <person name="Mitchell P."/>
        </authorList>
    </citation>
    <scope>FUNCTION</scope>
    <scope>IDENTIFICATION IN THE EXOSOME COMPLEX BY MASS SPECTROMETRY</scope>
</reference>
<reference key="5">
    <citation type="journal article" date="2003" name="Nature">
        <title>Global analysis of protein localization in budding yeast.</title>
        <authorList>
            <person name="Huh W.-K."/>
            <person name="Falvo J.V."/>
            <person name="Gerke L.C."/>
            <person name="Carroll A.S."/>
            <person name="Howson R.W."/>
            <person name="Weissman J.S."/>
            <person name="O'Shea E.K."/>
        </authorList>
    </citation>
    <scope>SUBCELLULAR LOCATION [LARGE SCALE ANALYSIS]</scope>
</reference>
<reference key="6">
    <citation type="journal article" date="2003" name="Nature">
        <title>Global analysis of protein expression in yeast.</title>
        <authorList>
            <person name="Ghaemmaghami S."/>
            <person name="Huh W.-K."/>
            <person name="Bower K."/>
            <person name="Howson R.W."/>
            <person name="Belle A."/>
            <person name="Dephoure N."/>
            <person name="O'Shea E.K."/>
            <person name="Weissman J.S."/>
        </authorList>
    </citation>
    <scope>LEVEL OF PROTEIN EXPRESSION [LARGE SCALE ANALYSIS]</scope>
</reference>
<reference key="7">
    <citation type="journal article" date="2006" name="Cell">
        <title>Reconstitution, activities, and structure of the eukaryotic RNA exosome.</title>
        <authorList>
            <person name="Liu Q."/>
            <person name="Greimann J.C."/>
            <person name="Lima C.D."/>
        </authorList>
    </citation>
    <scope>RECONSTITUTION OF THE RNA EXOSOME COMPLEX</scope>
    <scope>LACK OF EXONUCLEASE ACTIVITY</scope>
</reference>
<reference key="8">
    <citation type="journal article" date="2007" name="Cell">
        <authorList>
            <person name="Liu Q."/>
            <person name="Greimann J.C."/>
            <person name="Lima C.D."/>
        </authorList>
    </citation>
    <scope>ERRATUM OF PUBMED:17174896</scope>
</reference>
<reference key="9">
    <citation type="journal article" date="2007" name="Nat. Struct. Mol. Biol.">
        <title>A single subunit, Dis3, is essentially responsible for yeast exosome core activity.</title>
        <authorList>
            <person name="Dziembowski A."/>
            <person name="Lorentzen E."/>
            <person name="Conti E."/>
            <person name="Seraphin B."/>
        </authorList>
    </citation>
    <scope>IDENTIFICATION BY MASS SPECTROMETRY</scope>
    <scope>FUNCTION</scope>
    <scope>INTERACTION OF THE EXOSOME WITH RRP6 AND SKI7</scope>
    <scope>SUBUNIT</scope>
</reference>
<reference key="10">
    <citation type="journal article" date="2008" name="Mol. Cell. Proteomics">
        <title>A multidimensional chromatography technology for in-depth phosphoproteome analysis.</title>
        <authorList>
            <person name="Albuquerque C.P."/>
            <person name="Smolka M.B."/>
            <person name="Payne S.H."/>
            <person name="Bafna V."/>
            <person name="Eng J."/>
            <person name="Zhou H."/>
        </authorList>
    </citation>
    <scope>IDENTIFICATION BY MASS SPECTROMETRY [LARGE SCALE ANALYSIS]</scope>
</reference>
<reference key="11">
    <citation type="journal article" date="2009" name="Nat. Struct. Mol. Biol.">
        <title>The exosome contains domains with specific endoribonuclease, exoribonuclease and cytoplasmic mRNA decay activities.</title>
        <authorList>
            <person name="Schaeffer D."/>
            <person name="Tsanova B."/>
            <person name="Barbas A."/>
            <person name="Reis F.P."/>
            <person name="Dastidar E.G."/>
            <person name="Sanchez-Rotunno M."/>
            <person name="Arraiano C.M."/>
            <person name="van Hoof A."/>
        </authorList>
    </citation>
    <scope>FUNCTION IN RNA EXOSOME COMPLEX STABILITY</scope>
</reference>
<dbReference type="EMBL" id="Z74884">
    <property type="protein sequence ID" value="CAA99163.1"/>
    <property type="molecule type" value="Genomic_DNA"/>
</dbReference>
<dbReference type="EMBL" id="AY692926">
    <property type="protein sequence ID" value="AAT92945.1"/>
    <property type="molecule type" value="Genomic_DNA"/>
</dbReference>
<dbReference type="EMBL" id="BK006948">
    <property type="protein sequence ID" value="DAA10643.2"/>
    <property type="molecule type" value="Genomic_DNA"/>
</dbReference>
<dbReference type="PIR" id="S61872">
    <property type="entry name" value="S61872"/>
</dbReference>
<dbReference type="RefSeq" id="NP_014499.2">
    <property type="nucleotide sequence ID" value="NM_001183396.2"/>
</dbReference>
<dbReference type="PDB" id="2JA9">
    <property type="method" value="X-ray"/>
    <property type="resolution" value="2.20 A"/>
    <property type="chains" value="A=62-236"/>
</dbReference>
<dbReference type="PDB" id="4IFD">
    <property type="method" value="X-ray"/>
    <property type="resolution" value="2.80 A"/>
    <property type="chains" value="G=1-240"/>
</dbReference>
<dbReference type="PDB" id="4OO1">
    <property type="method" value="X-ray"/>
    <property type="resolution" value="3.30 A"/>
    <property type="chains" value="G=1-240"/>
</dbReference>
<dbReference type="PDB" id="5C0W">
    <property type="method" value="X-ray"/>
    <property type="resolution" value="4.60 A"/>
    <property type="chains" value="G=1-240"/>
</dbReference>
<dbReference type="PDB" id="5C0X">
    <property type="method" value="X-ray"/>
    <property type="resolution" value="3.81 A"/>
    <property type="chains" value="G=1-240"/>
</dbReference>
<dbReference type="PDB" id="5G06">
    <property type="method" value="EM"/>
    <property type="resolution" value="4.20 A"/>
    <property type="chains" value="G=1-240"/>
</dbReference>
<dbReference type="PDB" id="5JEA">
    <property type="method" value="X-ray"/>
    <property type="resolution" value="2.65 A"/>
    <property type="chains" value="G=1-240"/>
</dbReference>
<dbReference type="PDB" id="5K36">
    <property type="method" value="X-ray"/>
    <property type="resolution" value="3.10 A"/>
    <property type="chains" value="G=1-240"/>
</dbReference>
<dbReference type="PDB" id="5OKZ">
    <property type="method" value="X-ray"/>
    <property type="resolution" value="3.20 A"/>
    <property type="chains" value="G/Q/a/k=1-240"/>
</dbReference>
<dbReference type="PDB" id="5VZJ">
    <property type="method" value="X-ray"/>
    <property type="resolution" value="3.30 A"/>
    <property type="chains" value="G=1-240"/>
</dbReference>
<dbReference type="PDB" id="6FSZ">
    <property type="method" value="EM"/>
    <property type="resolution" value="4.60 A"/>
    <property type="chains" value="GG=1-240"/>
</dbReference>
<dbReference type="PDB" id="6LQS">
    <property type="method" value="EM"/>
    <property type="resolution" value="3.80 A"/>
    <property type="chains" value="R0=1-240"/>
</dbReference>
<dbReference type="PDB" id="7AJT">
    <property type="method" value="EM"/>
    <property type="resolution" value="4.60 A"/>
    <property type="chains" value="EH=1-240"/>
</dbReference>
<dbReference type="PDB" id="7AJU">
    <property type="method" value="EM"/>
    <property type="resolution" value="3.80 A"/>
    <property type="chains" value="EH=1-240"/>
</dbReference>
<dbReference type="PDB" id="7D4I">
    <property type="method" value="EM"/>
    <property type="resolution" value="4.00 A"/>
    <property type="chains" value="R0=1-240"/>
</dbReference>
<dbReference type="PDB" id="8QCF">
    <property type="method" value="EM"/>
    <property type="resolution" value="2.55 A"/>
    <property type="chains" value="H=1-240"/>
</dbReference>
<dbReference type="PDBsum" id="2JA9"/>
<dbReference type="PDBsum" id="4IFD"/>
<dbReference type="PDBsum" id="4OO1"/>
<dbReference type="PDBsum" id="5C0W"/>
<dbReference type="PDBsum" id="5C0X"/>
<dbReference type="PDBsum" id="5G06"/>
<dbReference type="PDBsum" id="5JEA"/>
<dbReference type="PDBsum" id="5K36"/>
<dbReference type="PDBsum" id="5OKZ"/>
<dbReference type="PDBsum" id="5VZJ"/>
<dbReference type="PDBsum" id="6FSZ"/>
<dbReference type="PDBsum" id="6LQS"/>
<dbReference type="PDBsum" id="7AJT"/>
<dbReference type="PDBsum" id="7AJU"/>
<dbReference type="PDBsum" id="7D4I"/>
<dbReference type="PDBsum" id="8QCF"/>
<dbReference type="EMDB" id="EMD-0952"/>
<dbReference type="EMDB" id="EMD-11807"/>
<dbReference type="EMDB" id="EMD-11808"/>
<dbReference type="EMDB" id="EMD-18329"/>
<dbReference type="EMDB" id="EMD-30574"/>
<dbReference type="EMDB" id="EMD-4301"/>
<dbReference type="SMR" id="Q08285"/>
<dbReference type="BioGRID" id="34275">
    <property type="interactions" value="70"/>
</dbReference>
<dbReference type="ComplexPortal" id="CPX-599">
    <property type="entry name" value="Nuclear/nucleolar exosome complex, DIS3-RRP6 variant"/>
</dbReference>
<dbReference type="ComplexPortal" id="CPX-603">
    <property type="entry name" value="Cytoplasmic exosome complex, DIS3 variant"/>
</dbReference>
<dbReference type="DIP" id="DIP-5330N"/>
<dbReference type="FunCoup" id="Q08285">
    <property type="interactions" value="965"/>
</dbReference>
<dbReference type="IntAct" id="Q08285">
    <property type="interactions" value="69"/>
</dbReference>
<dbReference type="MINT" id="Q08285"/>
<dbReference type="STRING" id="4932.YOL142W"/>
<dbReference type="GlyGen" id="Q08285">
    <property type="glycosylation" value="1 site"/>
</dbReference>
<dbReference type="iPTMnet" id="Q08285"/>
<dbReference type="PaxDb" id="4932-YOL142W"/>
<dbReference type="PeptideAtlas" id="Q08285"/>
<dbReference type="EnsemblFungi" id="YOL142W_mRNA">
    <property type="protein sequence ID" value="YOL142W"/>
    <property type="gene ID" value="YOL142W"/>
</dbReference>
<dbReference type="GeneID" id="854023"/>
<dbReference type="KEGG" id="sce:YOL142W"/>
<dbReference type="AGR" id="SGD:S000005502"/>
<dbReference type="SGD" id="S000005502">
    <property type="gene designation" value="RRP40"/>
</dbReference>
<dbReference type="VEuPathDB" id="FungiDB:YOL142W"/>
<dbReference type="eggNOG" id="KOG1004">
    <property type="taxonomic scope" value="Eukaryota"/>
</dbReference>
<dbReference type="GeneTree" id="ENSGT00940000153596"/>
<dbReference type="HOGENOM" id="CLU_069847_0_0_1"/>
<dbReference type="InParanoid" id="Q08285"/>
<dbReference type="OMA" id="SYMAFPN"/>
<dbReference type="OrthoDB" id="340500at2759"/>
<dbReference type="BioCyc" id="YEAST:G3O-33533-MONOMER"/>
<dbReference type="Reactome" id="R-SCE-429958">
    <property type="pathway name" value="mRNA decay by 3' to 5' exoribonuclease"/>
</dbReference>
<dbReference type="Reactome" id="R-SCE-450385">
    <property type="pathway name" value="Butyrate Response Factor 1 (BRF1) binds and destabilizes mRNA"/>
</dbReference>
<dbReference type="Reactome" id="R-SCE-450513">
    <property type="pathway name" value="Tristetraprolin (TTP, ZFP36) binds and destabilizes mRNA"/>
</dbReference>
<dbReference type="Reactome" id="R-SCE-6791226">
    <property type="pathway name" value="Major pathway of rRNA processing in the nucleolus and cytosol"/>
</dbReference>
<dbReference type="BioGRID-ORCS" id="854023">
    <property type="hits" value="3 hits in 10 CRISPR screens"/>
</dbReference>
<dbReference type="CD-CODE" id="BDAE0F88">
    <property type="entry name" value="Nucleolus"/>
</dbReference>
<dbReference type="EvolutionaryTrace" id="Q08285"/>
<dbReference type="PRO" id="PR:Q08285"/>
<dbReference type="Proteomes" id="UP000002311">
    <property type="component" value="Chromosome XV"/>
</dbReference>
<dbReference type="RNAct" id="Q08285">
    <property type="molecule type" value="protein"/>
</dbReference>
<dbReference type="GO" id="GO:0000177">
    <property type="term" value="C:cytoplasmic exosome (RNase complex)"/>
    <property type="evidence" value="ECO:0000314"/>
    <property type="project" value="SGD"/>
</dbReference>
<dbReference type="GO" id="GO:0000178">
    <property type="term" value="C:exosome (RNase complex)"/>
    <property type="evidence" value="ECO:0000353"/>
    <property type="project" value="ComplexPortal"/>
</dbReference>
<dbReference type="GO" id="GO:0000176">
    <property type="term" value="C:nuclear exosome (RNase complex)"/>
    <property type="evidence" value="ECO:0000314"/>
    <property type="project" value="SGD"/>
</dbReference>
<dbReference type="GO" id="GO:0005730">
    <property type="term" value="C:nucleolus"/>
    <property type="evidence" value="ECO:0000314"/>
    <property type="project" value="ComplexPortal"/>
</dbReference>
<dbReference type="GO" id="GO:0005634">
    <property type="term" value="C:nucleus"/>
    <property type="evidence" value="ECO:0000314"/>
    <property type="project" value="ComplexPortal"/>
</dbReference>
<dbReference type="GO" id="GO:0030145">
    <property type="term" value="F:manganese ion binding"/>
    <property type="evidence" value="ECO:0000314"/>
    <property type="project" value="SGD"/>
</dbReference>
<dbReference type="GO" id="GO:0003723">
    <property type="term" value="F:RNA binding"/>
    <property type="evidence" value="ECO:0000314"/>
    <property type="project" value="SGD"/>
</dbReference>
<dbReference type="GO" id="GO:0071034">
    <property type="term" value="P:CUT catabolic process"/>
    <property type="evidence" value="ECO:0000318"/>
    <property type="project" value="GO_Central"/>
</dbReference>
<dbReference type="GO" id="GO:0000467">
    <property type="term" value="P:exonucleolytic trimming to generate mature 3'-end of 5.8S rRNA from tricistronic rRNA transcript (SSU-rRNA, 5.8S rRNA, LSU-rRNA)"/>
    <property type="evidence" value="ECO:0000315"/>
    <property type="project" value="SGD"/>
</dbReference>
<dbReference type="GO" id="GO:0071035">
    <property type="term" value="P:nuclear polyadenylation-dependent rRNA catabolic process"/>
    <property type="evidence" value="ECO:0000315"/>
    <property type="project" value="SGD"/>
</dbReference>
<dbReference type="GO" id="GO:0000956">
    <property type="term" value="P:nuclear-transcribed mRNA catabolic process"/>
    <property type="evidence" value="ECO:0000318"/>
    <property type="project" value="GO_Central"/>
</dbReference>
<dbReference type="GO" id="GO:0071051">
    <property type="term" value="P:poly(A)-dependent snoRNA 3'-end processing"/>
    <property type="evidence" value="ECO:0000318"/>
    <property type="project" value="GO_Central"/>
</dbReference>
<dbReference type="GO" id="GO:0006401">
    <property type="term" value="P:RNA catabolic process"/>
    <property type="evidence" value="ECO:0000314"/>
    <property type="project" value="ComplexPortal"/>
</dbReference>
<dbReference type="GO" id="GO:0006396">
    <property type="term" value="P:RNA processing"/>
    <property type="evidence" value="ECO:0000314"/>
    <property type="project" value="ComplexPortal"/>
</dbReference>
<dbReference type="GO" id="GO:0071038">
    <property type="term" value="P:TRAMP-dependent tRNA surveillance pathway"/>
    <property type="evidence" value="ECO:0000314"/>
    <property type="project" value="SGD"/>
</dbReference>
<dbReference type="GO" id="GO:0034475">
    <property type="term" value="P:U4 snRNA 3'-end processing"/>
    <property type="evidence" value="ECO:0000318"/>
    <property type="project" value="GO_Central"/>
</dbReference>
<dbReference type="CDD" id="cd22526">
    <property type="entry name" value="KH-I_Rrp40"/>
    <property type="match status" value="1"/>
</dbReference>
<dbReference type="CDD" id="cd05790">
    <property type="entry name" value="S1_Rrp40"/>
    <property type="match status" value="1"/>
</dbReference>
<dbReference type="FunFam" id="2.40.50.140:FF:000127">
    <property type="entry name" value="Exosome complex component RRP40"/>
    <property type="match status" value="1"/>
</dbReference>
<dbReference type="FunFam" id="3.30.1370.10:FF:000114">
    <property type="entry name" value="Exosome complex component RRP40"/>
    <property type="match status" value="1"/>
</dbReference>
<dbReference type="Gene3D" id="2.40.50.100">
    <property type="match status" value="1"/>
</dbReference>
<dbReference type="Gene3D" id="3.30.1370.10">
    <property type="entry name" value="K Homology domain, type 1"/>
    <property type="match status" value="1"/>
</dbReference>
<dbReference type="Gene3D" id="2.40.50.140">
    <property type="entry name" value="Nucleic acid-binding proteins"/>
    <property type="match status" value="1"/>
</dbReference>
<dbReference type="InterPro" id="IPR026699">
    <property type="entry name" value="Exosome_RNA_bind1/RRP40/RRP4"/>
</dbReference>
<dbReference type="InterPro" id="IPR004088">
    <property type="entry name" value="KH_dom_type_1"/>
</dbReference>
<dbReference type="InterPro" id="IPR036612">
    <property type="entry name" value="KH_dom_type_1_sf"/>
</dbReference>
<dbReference type="InterPro" id="IPR012340">
    <property type="entry name" value="NA-bd_OB-fold"/>
</dbReference>
<dbReference type="InterPro" id="IPR049469">
    <property type="entry name" value="RRP40_KH-I"/>
</dbReference>
<dbReference type="InterPro" id="IPR041054">
    <property type="entry name" value="Rrp40_N_euk"/>
</dbReference>
<dbReference type="InterPro" id="IPR037319">
    <property type="entry name" value="Rrp40_S1"/>
</dbReference>
<dbReference type="PANTHER" id="PTHR21321:SF1">
    <property type="entry name" value="EXOSOME COMPLEX COMPONENT RRP40"/>
    <property type="match status" value="1"/>
</dbReference>
<dbReference type="PANTHER" id="PTHR21321">
    <property type="entry name" value="PNAS-3 RELATED"/>
    <property type="match status" value="1"/>
</dbReference>
<dbReference type="Pfam" id="PF15985">
    <property type="entry name" value="KH_6"/>
    <property type="match status" value="1"/>
</dbReference>
<dbReference type="Pfam" id="PF18311">
    <property type="entry name" value="Rrp40_N"/>
    <property type="match status" value="1"/>
</dbReference>
<dbReference type="Pfam" id="PF21262">
    <property type="entry name" value="RRP40_S1"/>
    <property type="match status" value="1"/>
</dbReference>
<dbReference type="SUPFAM" id="SSF54791">
    <property type="entry name" value="Eukaryotic type KH-domain (KH-domain type I)"/>
    <property type="match status" value="1"/>
</dbReference>
<dbReference type="SUPFAM" id="SSF50249">
    <property type="entry name" value="Nucleic acid-binding proteins"/>
    <property type="match status" value="1"/>
</dbReference>
<proteinExistence type="evidence at protein level"/>
<accession>Q08285</accession>
<accession>D6W1S7</accession>
<accession>E9P8Z4</accession>
<feature type="chain" id="PRO_0000097453" description="Exosome complex component RRP40">
    <location>
        <begin position="1"/>
        <end position="240"/>
    </location>
</feature>
<feature type="domain" description="S1 motif">
    <location>
        <begin position="67"/>
        <end position="137"/>
    </location>
</feature>
<feature type="sequence conflict" description="In Ref. 1; CAA99163." evidence="6" ref="1">
    <original>L</original>
    <variation>F</variation>
    <location>
        <position position="160"/>
    </location>
</feature>
<feature type="strand" evidence="9">
    <location>
        <begin position="3"/>
        <end position="5"/>
    </location>
</feature>
<feature type="strand" evidence="9">
    <location>
        <begin position="15"/>
        <end position="17"/>
    </location>
</feature>
<feature type="strand" evidence="9">
    <location>
        <begin position="19"/>
        <end position="21"/>
    </location>
</feature>
<feature type="strand" evidence="9">
    <location>
        <begin position="25"/>
        <end position="27"/>
    </location>
</feature>
<feature type="turn" evidence="9">
    <location>
        <begin position="29"/>
        <end position="31"/>
    </location>
</feature>
<feature type="strand" evidence="9">
    <location>
        <begin position="34"/>
        <end position="36"/>
    </location>
</feature>
<feature type="strand" evidence="9">
    <location>
        <begin position="40"/>
        <end position="44"/>
    </location>
</feature>
<feature type="strand" evidence="9">
    <location>
        <begin position="53"/>
        <end position="58"/>
    </location>
</feature>
<feature type="strand" evidence="7">
    <location>
        <begin position="71"/>
        <end position="79"/>
    </location>
</feature>
<feature type="strand" evidence="7">
    <location>
        <begin position="81"/>
        <end position="89"/>
    </location>
</feature>
<feature type="strand" evidence="7">
    <location>
        <begin position="95"/>
        <end position="98"/>
    </location>
</feature>
<feature type="helix" evidence="8">
    <location>
        <begin position="99"/>
        <end position="101"/>
    </location>
</feature>
<feature type="strand" evidence="8">
    <location>
        <begin position="102"/>
        <end position="104"/>
    </location>
</feature>
<feature type="strand" evidence="7">
    <location>
        <begin position="107"/>
        <end position="109"/>
    </location>
</feature>
<feature type="strand" evidence="7">
    <location>
        <begin position="118"/>
        <end position="125"/>
    </location>
</feature>
<feature type="strand" evidence="9">
    <location>
        <begin position="128"/>
        <end position="130"/>
    </location>
</feature>
<feature type="strand" evidence="7">
    <location>
        <begin position="133"/>
        <end position="137"/>
    </location>
</feature>
<feature type="turn" evidence="7">
    <location>
        <begin position="139"/>
        <end position="141"/>
    </location>
</feature>
<feature type="strand" evidence="7">
    <location>
        <begin position="148"/>
        <end position="150"/>
    </location>
</feature>
<feature type="strand" evidence="7">
    <location>
        <begin position="154"/>
        <end position="157"/>
    </location>
</feature>
<feature type="helix" evidence="7">
    <location>
        <begin position="160"/>
        <end position="168"/>
    </location>
</feature>
<feature type="helix" evidence="7">
    <location>
        <begin position="174"/>
        <end position="179"/>
    </location>
</feature>
<feature type="strand" evidence="7">
    <location>
        <begin position="185"/>
        <end position="189"/>
    </location>
</feature>
<feature type="turn" evidence="7">
    <location>
        <begin position="190"/>
        <end position="192"/>
    </location>
</feature>
<feature type="strand" evidence="7">
    <location>
        <begin position="193"/>
        <end position="197"/>
    </location>
</feature>
<feature type="helix" evidence="7">
    <location>
        <begin position="201"/>
        <end position="217"/>
    </location>
</feature>
<feature type="helix" evidence="7">
    <location>
        <begin position="220"/>
        <end position="222"/>
    </location>
</feature>
<feature type="helix" evidence="7">
    <location>
        <begin position="223"/>
        <end position="230"/>
    </location>
</feature>
<feature type="turn" evidence="7">
    <location>
        <begin position="231"/>
        <end position="233"/>
    </location>
</feature>
<sequence length="240" mass="26556">MSTFIFPGDSFPVDPTTPVKLGPGIYCDPNTQEIRPVNTGVLHVSAKGKSGVQTAYIDYSSKRYIPSVNDFVIGVIIGTFSDSYKVSLQNFSSSVSLSYMAFPNASKKNRPTLQVGDLVYARVCTAEKELEAEIECFDSTTGRDAGFGILEDGMIIDVNLNFARQLLFNNDFPLLKVLAAHTKFEVAIGLNGKIWVKCEELSNTLACYRTIMECCQKNDTAAFKDIAKRQFKEILTVKEE</sequence>
<name>RRP40_YEAST</name>
<evidence type="ECO:0000269" key="1">
    <source>
    </source>
</evidence>
<evidence type="ECO:0000269" key="2">
    <source>
    </source>
</evidence>
<evidence type="ECO:0000269" key="3">
    <source>
    </source>
</evidence>
<evidence type="ECO:0000269" key="4">
    <source>
    </source>
</evidence>
<evidence type="ECO:0000269" key="5">
    <source>
    </source>
</evidence>
<evidence type="ECO:0000305" key="6"/>
<evidence type="ECO:0007829" key="7">
    <source>
        <dbReference type="PDB" id="2JA9"/>
    </source>
</evidence>
<evidence type="ECO:0007829" key="8">
    <source>
        <dbReference type="PDB" id="4OO1"/>
    </source>
</evidence>
<evidence type="ECO:0007829" key="9">
    <source>
        <dbReference type="PDB" id="5JEA"/>
    </source>
</evidence>
<protein>
    <recommendedName>
        <fullName>Exosome complex component RRP40</fullName>
    </recommendedName>
    <alternativeName>
        <fullName>Ribosomal RNA-processing protein 40</fullName>
    </alternativeName>
</protein>